<keyword id="KW-0145">Chemotaxis</keyword>
<keyword id="KW-0963">Cytoplasm</keyword>
<keyword id="KW-0378">Hydrolase</keyword>
<keyword id="KW-0597">Phosphoprotein</keyword>
<keyword id="KW-1185">Reference proteome</keyword>
<protein>
    <recommendedName>
        <fullName>Protein-glutamate methylesterase/protein-glutamine glutaminase of group 3 operon</fullName>
        <ecNumber evidence="1">3.1.1.61</ecNumber>
        <ecNumber evidence="1">3.5.1.44</ecNumber>
    </recommendedName>
</protein>
<evidence type="ECO:0000255" key="1">
    <source>
        <dbReference type="HAMAP-Rule" id="MF_00099"/>
    </source>
</evidence>
<accession>Q88MS5</accession>
<name>CHEB3_PSEPK</name>
<gene>
    <name evidence="1" type="primary">cheB3</name>
    <name type="ordered locus">PP_1493</name>
</gene>
<sequence>MKIAIVNDMPLAVEALRRAVALEPAHQVVWVASNGAEAVQRCTEQLPDLILMDLIMPVMDGVEATRRIMAETPCAIVIVTVDRKQNVHRVFEAMGHGALDVVDTPALGAGDAREAAAPLLRKILNIGWLVGQQRAPAARSVAAPLREASQRRGLVAIGSSAGGPAALEVLLKGLPAAFPAAIVLVQHVDQVFAAGMAEWLSSAAGLPVRLAREGEPPQPGQVLLAGTNHHIRLLQNGQLAYTAEPVNEIYRPSIDVFFESVARYWNGDAVGVLLTGMGRDGAQGLKLMRQQGFLTIAQDQASSAVYGMPKAAAAIDAAVEIRPLERIAGRLTEFFAK</sequence>
<dbReference type="EC" id="3.1.1.61" evidence="1"/>
<dbReference type="EC" id="3.5.1.44" evidence="1"/>
<dbReference type="EMBL" id="AE015451">
    <property type="protein sequence ID" value="AAN67115.1"/>
    <property type="molecule type" value="Genomic_DNA"/>
</dbReference>
<dbReference type="RefSeq" id="NP_743651.1">
    <property type="nucleotide sequence ID" value="NC_002947.4"/>
</dbReference>
<dbReference type="SMR" id="Q88MS5"/>
<dbReference type="STRING" id="160488.PP_1493"/>
<dbReference type="PaxDb" id="160488-PP_1493"/>
<dbReference type="KEGG" id="ppu:PP_1493"/>
<dbReference type="PATRIC" id="fig|160488.4.peg.1583"/>
<dbReference type="eggNOG" id="COG2201">
    <property type="taxonomic scope" value="Bacteria"/>
</dbReference>
<dbReference type="HOGENOM" id="CLU_000445_51_0_6"/>
<dbReference type="OrthoDB" id="9793421at2"/>
<dbReference type="PhylomeDB" id="Q88MS5"/>
<dbReference type="BioCyc" id="PPUT160488:G1G01-1584-MONOMER"/>
<dbReference type="Proteomes" id="UP000000556">
    <property type="component" value="Chromosome"/>
</dbReference>
<dbReference type="GO" id="GO:0005737">
    <property type="term" value="C:cytoplasm"/>
    <property type="evidence" value="ECO:0007669"/>
    <property type="project" value="UniProtKB-SubCell"/>
</dbReference>
<dbReference type="GO" id="GO:0000156">
    <property type="term" value="F:phosphorelay response regulator activity"/>
    <property type="evidence" value="ECO:0007669"/>
    <property type="project" value="InterPro"/>
</dbReference>
<dbReference type="GO" id="GO:0008984">
    <property type="term" value="F:protein-glutamate methylesterase activity"/>
    <property type="evidence" value="ECO:0007669"/>
    <property type="project" value="UniProtKB-UniRule"/>
</dbReference>
<dbReference type="GO" id="GO:0050568">
    <property type="term" value="F:protein-glutamine glutaminase activity"/>
    <property type="evidence" value="ECO:0007669"/>
    <property type="project" value="UniProtKB-UniRule"/>
</dbReference>
<dbReference type="GO" id="GO:0006935">
    <property type="term" value="P:chemotaxis"/>
    <property type="evidence" value="ECO:0007669"/>
    <property type="project" value="UniProtKB-UniRule"/>
</dbReference>
<dbReference type="CDD" id="cd16432">
    <property type="entry name" value="CheB_Rec"/>
    <property type="match status" value="1"/>
</dbReference>
<dbReference type="CDD" id="cd17541">
    <property type="entry name" value="REC_CheB-like"/>
    <property type="match status" value="1"/>
</dbReference>
<dbReference type="Gene3D" id="3.40.50.2300">
    <property type="match status" value="1"/>
</dbReference>
<dbReference type="Gene3D" id="3.40.50.180">
    <property type="entry name" value="Methylesterase CheB, C-terminal domain"/>
    <property type="match status" value="1"/>
</dbReference>
<dbReference type="HAMAP" id="MF_00099">
    <property type="entry name" value="CheB_chemtxs"/>
    <property type="match status" value="1"/>
</dbReference>
<dbReference type="InterPro" id="IPR008248">
    <property type="entry name" value="CheB-like"/>
</dbReference>
<dbReference type="InterPro" id="IPR035909">
    <property type="entry name" value="CheB_C"/>
</dbReference>
<dbReference type="InterPro" id="IPR011006">
    <property type="entry name" value="CheY-like_superfamily"/>
</dbReference>
<dbReference type="InterPro" id="IPR000673">
    <property type="entry name" value="Sig_transdc_resp-reg_Me-estase"/>
</dbReference>
<dbReference type="InterPro" id="IPR001789">
    <property type="entry name" value="Sig_transdc_resp-reg_receiver"/>
</dbReference>
<dbReference type="NCBIfam" id="NF001965">
    <property type="entry name" value="PRK00742.1"/>
    <property type="match status" value="1"/>
</dbReference>
<dbReference type="NCBIfam" id="NF009206">
    <property type="entry name" value="PRK12555.1"/>
    <property type="match status" value="1"/>
</dbReference>
<dbReference type="PANTHER" id="PTHR42872">
    <property type="entry name" value="PROTEIN-GLUTAMATE METHYLESTERASE/PROTEIN-GLUTAMINE GLUTAMINASE"/>
    <property type="match status" value="1"/>
</dbReference>
<dbReference type="PANTHER" id="PTHR42872:SF6">
    <property type="entry name" value="PROTEIN-GLUTAMATE METHYLESTERASE_PROTEIN-GLUTAMINE GLUTAMINASE"/>
    <property type="match status" value="1"/>
</dbReference>
<dbReference type="Pfam" id="PF01339">
    <property type="entry name" value="CheB_methylest"/>
    <property type="match status" value="1"/>
</dbReference>
<dbReference type="Pfam" id="PF00072">
    <property type="entry name" value="Response_reg"/>
    <property type="match status" value="1"/>
</dbReference>
<dbReference type="PIRSF" id="PIRSF000876">
    <property type="entry name" value="RR_chemtxs_CheB"/>
    <property type="match status" value="1"/>
</dbReference>
<dbReference type="SMART" id="SM00448">
    <property type="entry name" value="REC"/>
    <property type="match status" value="1"/>
</dbReference>
<dbReference type="SUPFAM" id="SSF52172">
    <property type="entry name" value="CheY-like"/>
    <property type="match status" value="1"/>
</dbReference>
<dbReference type="SUPFAM" id="SSF52738">
    <property type="entry name" value="Methylesterase CheB, C-terminal domain"/>
    <property type="match status" value="1"/>
</dbReference>
<dbReference type="PROSITE" id="PS50122">
    <property type="entry name" value="CHEB"/>
    <property type="match status" value="1"/>
</dbReference>
<dbReference type="PROSITE" id="PS50110">
    <property type="entry name" value="RESPONSE_REGULATORY"/>
    <property type="match status" value="1"/>
</dbReference>
<reference key="1">
    <citation type="journal article" date="2002" name="Environ. Microbiol.">
        <title>Complete genome sequence and comparative analysis of the metabolically versatile Pseudomonas putida KT2440.</title>
        <authorList>
            <person name="Nelson K.E."/>
            <person name="Weinel C."/>
            <person name="Paulsen I.T."/>
            <person name="Dodson R.J."/>
            <person name="Hilbert H."/>
            <person name="Martins dos Santos V.A.P."/>
            <person name="Fouts D.E."/>
            <person name="Gill S.R."/>
            <person name="Pop M."/>
            <person name="Holmes M."/>
            <person name="Brinkac L.M."/>
            <person name="Beanan M.J."/>
            <person name="DeBoy R.T."/>
            <person name="Daugherty S.C."/>
            <person name="Kolonay J.F."/>
            <person name="Madupu R."/>
            <person name="Nelson W.C."/>
            <person name="White O."/>
            <person name="Peterson J.D."/>
            <person name="Khouri H.M."/>
            <person name="Hance I."/>
            <person name="Chris Lee P."/>
            <person name="Holtzapple E.K."/>
            <person name="Scanlan D."/>
            <person name="Tran K."/>
            <person name="Moazzez A."/>
            <person name="Utterback T.R."/>
            <person name="Rizzo M."/>
            <person name="Lee K."/>
            <person name="Kosack D."/>
            <person name="Moestl D."/>
            <person name="Wedler H."/>
            <person name="Lauber J."/>
            <person name="Stjepandic D."/>
            <person name="Hoheisel J."/>
            <person name="Straetz M."/>
            <person name="Heim S."/>
            <person name="Kiewitz C."/>
            <person name="Eisen J.A."/>
            <person name="Timmis K.N."/>
            <person name="Duesterhoeft A."/>
            <person name="Tuemmler B."/>
            <person name="Fraser C.M."/>
        </authorList>
    </citation>
    <scope>NUCLEOTIDE SEQUENCE [LARGE SCALE GENOMIC DNA]</scope>
    <source>
        <strain>ATCC 47054 / DSM 6125 / CFBP 8728 / NCIMB 11950 / KT2440</strain>
    </source>
</reference>
<proteinExistence type="inferred from homology"/>
<feature type="chain" id="PRO_0000158012" description="Protein-glutamate methylesterase/protein-glutamine glutaminase of group 3 operon">
    <location>
        <begin position="1"/>
        <end position="337"/>
    </location>
</feature>
<feature type="domain" description="Response regulatory" evidence="1">
    <location>
        <begin position="2"/>
        <end position="119"/>
    </location>
</feature>
<feature type="domain" description="CheB-type methylesterase" evidence="1">
    <location>
        <begin position="144"/>
        <end position="337"/>
    </location>
</feature>
<feature type="active site" evidence="1">
    <location>
        <position position="160"/>
    </location>
</feature>
<feature type="active site" evidence="1">
    <location>
        <position position="187"/>
    </location>
</feature>
<feature type="active site" evidence="1">
    <location>
        <position position="280"/>
    </location>
</feature>
<feature type="modified residue" description="4-aspartylphosphate" evidence="1">
    <location>
        <position position="53"/>
    </location>
</feature>
<organism>
    <name type="scientific">Pseudomonas putida (strain ATCC 47054 / DSM 6125 / CFBP 8728 / NCIMB 11950 / KT2440)</name>
    <dbReference type="NCBI Taxonomy" id="160488"/>
    <lineage>
        <taxon>Bacteria</taxon>
        <taxon>Pseudomonadati</taxon>
        <taxon>Pseudomonadota</taxon>
        <taxon>Gammaproteobacteria</taxon>
        <taxon>Pseudomonadales</taxon>
        <taxon>Pseudomonadaceae</taxon>
        <taxon>Pseudomonas</taxon>
    </lineage>
</organism>
<comment type="function">
    <text evidence="1">Involved in chemotaxis. Part of a chemotaxis signal transduction system that modulates chemotaxis in response to various stimuli. Catalyzes the demethylation of specific methylglutamate residues introduced into the chemoreceptors (methyl-accepting chemotaxis proteins or MCP) by CheR. Also mediates the irreversible deamidation of specific glutamine residues to glutamic acid.</text>
</comment>
<comment type="catalytic activity">
    <reaction evidence="1">
        <text>[protein]-L-glutamate 5-O-methyl ester + H2O = L-glutamyl-[protein] + methanol + H(+)</text>
        <dbReference type="Rhea" id="RHEA:23236"/>
        <dbReference type="Rhea" id="RHEA-COMP:10208"/>
        <dbReference type="Rhea" id="RHEA-COMP:10311"/>
        <dbReference type="ChEBI" id="CHEBI:15377"/>
        <dbReference type="ChEBI" id="CHEBI:15378"/>
        <dbReference type="ChEBI" id="CHEBI:17790"/>
        <dbReference type="ChEBI" id="CHEBI:29973"/>
        <dbReference type="ChEBI" id="CHEBI:82795"/>
        <dbReference type="EC" id="3.1.1.61"/>
    </reaction>
</comment>
<comment type="catalytic activity">
    <reaction evidence="1">
        <text>L-glutaminyl-[protein] + H2O = L-glutamyl-[protein] + NH4(+)</text>
        <dbReference type="Rhea" id="RHEA:16441"/>
        <dbReference type="Rhea" id="RHEA-COMP:10207"/>
        <dbReference type="Rhea" id="RHEA-COMP:10208"/>
        <dbReference type="ChEBI" id="CHEBI:15377"/>
        <dbReference type="ChEBI" id="CHEBI:28938"/>
        <dbReference type="ChEBI" id="CHEBI:29973"/>
        <dbReference type="ChEBI" id="CHEBI:30011"/>
        <dbReference type="EC" id="3.5.1.44"/>
    </reaction>
</comment>
<comment type="subcellular location">
    <subcellularLocation>
        <location evidence="1">Cytoplasm</location>
    </subcellularLocation>
</comment>
<comment type="domain">
    <text evidence="1">Contains a C-terminal catalytic domain, and an N-terminal region which modulates catalytic activity.</text>
</comment>
<comment type="PTM">
    <text evidence="1">Phosphorylated by CheA. Phosphorylation of the N-terminal regulatory domain activates the methylesterase activity.</text>
</comment>
<comment type="miscellaneous">
    <text>P.putida strain KT2440 does not have a chemotaxis group 2 operon.</text>
</comment>
<comment type="similarity">
    <text evidence="1">Belongs to the CheB family.</text>
</comment>